<name>RUVC_CUPNH</name>
<accession>Q0KEC1</accession>
<organism>
    <name type="scientific">Cupriavidus necator (strain ATCC 17699 / DSM 428 / KCTC 22496 / NCIMB 10442 / H16 / Stanier 337)</name>
    <name type="common">Ralstonia eutropha</name>
    <dbReference type="NCBI Taxonomy" id="381666"/>
    <lineage>
        <taxon>Bacteria</taxon>
        <taxon>Pseudomonadati</taxon>
        <taxon>Pseudomonadota</taxon>
        <taxon>Betaproteobacteria</taxon>
        <taxon>Burkholderiales</taxon>
        <taxon>Burkholderiaceae</taxon>
        <taxon>Cupriavidus</taxon>
    </lineage>
</organism>
<feature type="chain" id="PRO_1000002807" description="Crossover junction endodeoxyribonuclease RuvC">
    <location>
        <begin position="1"/>
        <end position="181"/>
    </location>
</feature>
<feature type="active site" evidence="1">
    <location>
        <position position="7"/>
    </location>
</feature>
<feature type="active site" evidence="1">
    <location>
        <position position="67"/>
    </location>
</feature>
<feature type="active site" evidence="1">
    <location>
        <position position="139"/>
    </location>
</feature>
<feature type="binding site" evidence="1">
    <location>
        <position position="7"/>
    </location>
    <ligand>
        <name>Mg(2+)</name>
        <dbReference type="ChEBI" id="CHEBI:18420"/>
        <label>1</label>
    </ligand>
</feature>
<feature type="binding site" evidence="1">
    <location>
        <position position="67"/>
    </location>
    <ligand>
        <name>Mg(2+)</name>
        <dbReference type="ChEBI" id="CHEBI:18420"/>
        <label>2</label>
    </ligand>
</feature>
<feature type="binding site" evidence="1">
    <location>
        <position position="139"/>
    </location>
    <ligand>
        <name>Mg(2+)</name>
        <dbReference type="ChEBI" id="CHEBI:18420"/>
        <label>1</label>
    </ligand>
</feature>
<evidence type="ECO:0000255" key="1">
    <source>
        <dbReference type="HAMAP-Rule" id="MF_00034"/>
    </source>
</evidence>
<keyword id="KW-0963">Cytoplasm</keyword>
<keyword id="KW-0227">DNA damage</keyword>
<keyword id="KW-0233">DNA recombination</keyword>
<keyword id="KW-0234">DNA repair</keyword>
<keyword id="KW-0238">DNA-binding</keyword>
<keyword id="KW-0255">Endonuclease</keyword>
<keyword id="KW-0378">Hydrolase</keyword>
<keyword id="KW-0460">Magnesium</keyword>
<keyword id="KW-0479">Metal-binding</keyword>
<keyword id="KW-0540">Nuclease</keyword>
<keyword id="KW-1185">Reference proteome</keyword>
<dbReference type="EC" id="3.1.21.10" evidence="1"/>
<dbReference type="EMBL" id="AM260479">
    <property type="protein sequence ID" value="CAJ91650.1"/>
    <property type="molecule type" value="Genomic_DNA"/>
</dbReference>
<dbReference type="RefSeq" id="WP_010813889.1">
    <property type="nucleotide sequence ID" value="NZ_CP039287.1"/>
</dbReference>
<dbReference type="SMR" id="Q0KEC1"/>
<dbReference type="STRING" id="381666.H16_A0500"/>
<dbReference type="KEGG" id="reh:H16_A0500"/>
<dbReference type="eggNOG" id="COG0817">
    <property type="taxonomic scope" value="Bacteria"/>
</dbReference>
<dbReference type="HOGENOM" id="CLU_091257_2_0_4"/>
<dbReference type="OrthoDB" id="9805499at2"/>
<dbReference type="Proteomes" id="UP000008210">
    <property type="component" value="Chromosome 1"/>
</dbReference>
<dbReference type="GO" id="GO:0005737">
    <property type="term" value="C:cytoplasm"/>
    <property type="evidence" value="ECO:0007669"/>
    <property type="project" value="UniProtKB-SubCell"/>
</dbReference>
<dbReference type="GO" id="GO:0048476">
    <property type="term" value="C:Holliday junction resolvase complex"/>
    <property type="evidence" value="ECO:0007669"/>
    <property type="project" value="UniProtKB-UniRule"/>
</dbReference>
<dbReference type="GO" id="GO:0008821">
    <property type="term" value="F:crossover junction DNA endonuclease activity"/>
    <property type="evidence" value="ECO:0007669"/>
    <property type="project" value="UniProtKB-UniRule"/>
</dbReference>
<dbReference type="GO" id="GO:0003677">
    <property type="term" value="F:DNA binding"/>
    <property type="evidence" value="ECO:0007669"/>
    <property type="project" value="UniProtKB-KW"/>
</dbReference>
<dbReference type="GO" id="GO:0000287">
    <property type="term" value="F:magnesium ion binding"/>
    <property type="evidence" value="ECO:0007669"/>
    <property type="project" value="UniProtKB-UniRule"/>
</dbReference>
<dbReference type="GO" id="GO:0006310">
    <property type="term" value="P:DNA recombination"/>
    <property type="evidence" value="ECO:0007669"/>
    <property type="project" value="UniProtKB-UniRule"/>
</dbReference>
<dbReference type="GO" id="GO:0006281">
    <property type="term" value="P:DNA repair"/>
    <property type="evidence" value="ECO:0007669"/>
    <property type="project" value="UniProtKB-UniRule"/>
</dbReference>
<dbReference type="CDD" id="cd16962">
    <property type="entry name" value="RuvC"/>
    <property type="match status" value="1"/>
</dbReference>
<dbReference type="FunFam" id="3.30.420.10:FF:000002">
    <property type="entry name" value="Crossover junction endodeoxyribonuclease RuvC"/>
    <property type="match status" value="1"/>
</dbReference>
<dbReference type="Gene3D" id="3.30.420.10">
    <property type="entry name" value="Ribonuclease H-like superfamily/Ribonuclease H"/>
    <property type="match status" value="1"/>
</dbReference>
<dbReference type="HAMAP" id="MF_00034">
    <property type="entry name" value="RuvC"/>
    <property type="match status" value="1"/>
</dbReference>
<dbReference type="InterPro" id="IPR012337">
    <property type="entry name" value="RNaseH-like_sf"/>
</dbReference>
<dbReference type="InterPro" id="IPR036397">
    <property type="entry name" value="RNaseH_sf"/>
</dbReference>
<dbReference type="InterPro" id="IPR020563">
    <property type="entry name" value="X-over_junc_endoDNase_Mg_BS"/>
</dbReference>
<dbReference type="InterPro" id="IPR002176">
    <property type="entry name" value="X-over_junc_endoDNase_RuvC"/>
</dbReference>
<dbReference type="NCBIfam" id="TIGR00228">
    <property type="entry name" value="ruvC"/>
    <property type="match status" value="1"/>
</dbReference>
<dbReference type="PANTHER" id="PTHR30194">
    <property type="entry name" value="CROSSOVER JUNCTION ENDODEOXYRIBONUCLEASE RUVC"/>
    <property type="match status" value="1"/>
</dbReference>
<dbReference type="PANTHER" id="PTHR30194:SF3">
    <property type="entry name" value="CROSSOVER JUNCTION ENDODEOXYRIBONUCLEASE RUVC"/>
    <property type="match status" value="1"/>
</dbReference>
<dbReference type="Pfam" id="PF02075">
    <property type="entry name" value="RuvC"/>
    <property type="match status" value="1"/>
</dbReference>
<dbReference type="PRINTS" id="PR00696">
    <property type="entry name" value="RSOLVASERUVC"/>
</dbReference>
<dbReference type="SUPFAM" id="SSF53098">
    <property type="entry name" value="Ribonuclease H-like"/>
    <property type="match status" value="1"/>
</dbReference>
<dbReference type="PROSITE" id="PS01321">
    <property type="entry name" value="RUVC"/>
    <property type="match status" value="1"/>
</dbReference>
<proteinExistence type="inferred from homology"/>
<sequence length="181" mass="18997">MRILGIDPGLRTTGFGVIEKHGNKLAYVASGTIKSDGNSTLPERLKTLYDGISEVSRTYAPDCAAIEKVFVNVNPQSTLLLGQARGAAICGLVGYGLPVFEYTALQLKVAVVGYGRANKAQVQEMVTRLLMLPGQPGSDAADALGVAICHANGSDTLGTLSGLAPDLVRKGMRVRRGRLVG</sequence>
<gene>
    <name evidence="1" type="primary">ruvC</name>
    <name type="ordered locus">H16_A0500</name>
</gene>
<reference key="1">
    <citation type="journal article" date="2006" name="Nat. Biotechnol.">
        <title>Genome sequence of the bioplastic-producing 'Knallgas' bacterium Ralstonia eutropha H16.</title>
        <authorList>
            <person name="Pohlmann A."/>
            <person name="Fricke W.F."/>
            <person name="Reinecke F."/>
            <person name="Kusian B."/>
            <person name="Liesegang H."/>
            <person name="Cramm R."/>
            <person name="Eitinger T."/>
            <person name="Ewering C."/>
            <person name="Poetter M."/>
            <person name="Schwartz E."/>
            <person name="Strittmatter A."/>
            <person name="Voss I."/>
            <person name="Gottschalk G."/>
            <person name="Steinbuechel A."/>
            <person name="Friedrich B."/>
            <person name="Bowien B."/>
        </authorList>
    </citation>
    <scope>NUCLEOTIDE SEQUENCE [LARGE SCALE GENOMIC DNA]</scope>
    <source>
        <strain>ATCC 17699 / DSM 428 / KCTC 22496 / NCIMB 10442 / H16 / Stanier 337</strain>
    </source>
</reference>
<comment type="function">
    <text evidence="1">The RuvA-RuvB-RuvC complex processes Holliday junction (HJ) DNA during genetic recombination and DNA repair. Endonuclease that resolves HJ intermediates. Cleaves cruciform DNA by making single-stranded nicks across the HJ at symmetrical positions within the homologous arms, yielding a 5'-phosphate and a 3'-hydroxyl group; requires a central core of homology in the junction. The consensus cleavage sequence is 5'-(A/T)TT(C/G)-3'. Cleavage occurs on the 3'-side of the TT dinucleotide at the point of strand exchange. HJ branch migration catalyzed by RuvA-RuvB allows RuvC to scan DNA until it finds its consensus sequence, where it cleaves and resolves the cruciform DNA.</text>
</comment>
<comment type="catalytic activity">
    <reaction evidence="1">
        <text>Endonucleolytic cleavage at a junction such as a reciprocal single-stranded crossover between two homologous DNA duplexes (Holliday junction).</text>
        <dbReference type="EC" id="3.1.21.10"/>
    </reaction>
</comment>
<comment type="cofactor">
    <cofactor evidence="1">
        <name>Mg(2+)</name>
        <dbReference type="ChEBI" id="CHEBI:18420"/>
    </cofactor>
    <text evidence="1">Binds 2 Mg(2+) ion per subunit.</text>
</comment>
<comment type="subunit">
    <text evidence="1">Homodimer which binds Holliday junction (HJ) DNA. The HJ becomes 2-fold symmetrical on binding to RuvC with unstacked arms; it has a different conformation from HJ DNA in complex with RuvA. In the full resolvosome a probable DNA-RuvA(4)-RuvB(12)-RuvC(2) complex forms which resolves the HJ.</text>
</comment>
<comment type="subcellular location">
    <subcellularLocation>
        <location evidence="1">Cytoplasm</location>
    </subcellularLocation>
</comment>
<comment type="similarity">
    <text evidence="1">Belongs to the RuvC family.</text>
</comment>
<protein>
    <recommendedName>
        <fullName evidence="1">Crossover junction endodeoxyribonuclease RuvC</fullName>
        <ecNumber evidence="1">3.1.21.10</ecNumber>
    </recommendedName>
    <alternativeName>
        <fullName evidence="1">Holliday junction nuclease RuvC</fullName>
    </alternativeName>
    <alternativeName>
        <fullName evidence="1">Holliday junction resolvase RuvC</fullName>
    </alternativeName>
</protein>